<proteinExistence type="inferred from homology"/>
<dbReference type="EMBL" id="CP000563">
    <property type="protein sequence ID" value="ABN61886.1"/>
    <property type="molecule type" value="Genomic_DNA"/>
</dbReference>
<dbReference type="RefSeq" id="WP_011846945.1">
    <property type="nucleotide sequence ID" value="NC_009052.1"/>
</dbReference>
<dbReference type="SMR" id="A3D573"/>
<dbReference type="STRING" id="325240.Sbal_2393"/>
<dbReference type="KEGG" id="sbl:Sbal_2393"/>
<dbReference type="HOGENOM" id="CLU_005965_2_1_6"/>
<dbReference type="OrthoDB" id="9766019at2"/>
<dbReference type="Proteomes" id="UP000001557">
    <property type="component" value="Chromosome"/>
</dbReference>
<dbReference type="GO" id="GO:0005524">
    <property type="term" value="F:ATP binding"/>
    <property type="evidence" value="ECO:0007669"/>
    <property type="project" value="UniProtKB-KW"/>
</dbReference>
<dbReference type="GO" id="GO:0016887">
    <property type="term" value="F:ATP hydrolysis activity"/>
    <property type="evidence" value="ECO:0007669"/>
    <property type="project" value="UniProtKB-UniRule"/>
</dbReference>
<dbReference type="GO" id="GO:0140662">
    <property type="term" value="F:ATP-dependent protein folding chaperone"/>
    <property type="evidence" value="ECO:0007669"/>
    <property type="project" value="InterPro"/>
</dbReference>
<dbReference type="GO" id="GO:0051082">
    <property type="term" value="F:unfolded protein binding"/>
    <property type="evidence" value="ECO:0007669"/>
    <property type="project" value="InterPro"/>
</dbReference>
<dbReference type="GO" id="GO:0016226">
    <property type="term" value="P:iron-sulfur cluster assembly"/>
    <property type="evidence" value="ECO:0007669"/>
    <property type="project" value="InterPro"/>
</dbReference>
<dbReference type="FunFam" id="3.30.420.40:FF:000046">
    <property type="entry name" value="Chaperone protein HscA"/>
    <property type="match status" value="1"/>
</dbReference>
<dbReference type="FunFam" id="2.60.34.10:FF:000005">
    <property type="entry name" value="Chaperone protein HscA homolog"/>
    <property type="match status" value="1"/>
</dbReference>
<dbReference type="Gene3D" id="1.20.1270.10">
    <property type="match status" value="1"/>
</dbReference>
<dbReference type="Gene3D" id="3.30.420.40">
    <property type="match status" value="2"/>
</dbReference>
<dbReference type="Gene3D" id="3.90.640.10">
    <property type="entry name" value="Actin, Chain A, domain 4"/>
    <property type="match status" value="1"/>
</dbReference>
<dbReference type="Gene3D" id="2.60.34.10">
    <property type="entry name" value="Substrate Binding Domain Of DNAk, Chain A, domain 1"/>
    <property type="match status" value="1"/>
</dbReference>
<dbReference type="HAMAP" id="MF_00679">
    <property type="entry name" value="HscA"/>
    <property type="match status" value="1"/>
</dbReference>
<dbReference type="InterPro" id="IPR043129">
    <property type="entry name" value="ATPase_NBD"/>
</dbReference>
<dbReference type="InterPro" id="IPR018181">
    <property type="entry name" value="Heat_shock_70_CS"/>
</dbReference>
<dbReference type="InterPro" id="IPR029048">
    <property type="entry name" value="HSP70_C_sf"/>
</dbReference>
<dbReference type="InterPro" id="IPR029047">
    <property type="entry name" value="HSP70_peptide-bd_sf"/>
</dbReference>
<dbReference type="InterPro" id="IPR013126">
    <property type="entry name" value="Hsp_70_fam"/>
</dbReference>
<dbReference type="InterPro" id="IPR010236">
    <property type="entry name" value="ISC_FeS_clus_asmbl_HscA"/>
</dbReference>
<dbReference type="NCBIfam" id="TIGR01991">
    <property type="entry name" value="HscA"/>
    <property type="match status" value="1"/>
</dbReference>
<dbReference type="NCBIfam" id="NF003520">
    <property type="entry name" value="PRK05183.1"/>
    <property type="match status" value="1"/>
</dbReference>
<dbReference type="PANTHER" id="PTHR19375">
    <property type="entry name" value="HEAT SHOCK PROTEIN 70KDA"/>
    <property type="match status" value="1"/>
</dbReference>
<dbReference type="Pfam" id="PF00012">
    <property type="entry name" value="HSP70"/>
    <property type="match status" value="1"/>
</dbReference>
<dbReference type="PRINTS" id="PR00301">
    <property type="entry name" value="HEATSHOCK70"/>
</dbReference>
<dbReference type="SUPFAM" id="SSF53067">
    <property type="entry name" value="Actin-like ATPase domain"/>
    <property type="match status" value="2"/>
</dbReference>
<dbReference type="SUPFAM" id="SSF100934">
    <property type="entry name" value="Heat shock protein 70kD (HSP70), C-terminal subdomain"/>
    <property type="match status" value="1"/>
</dbReference>
<dbReference type="SUPFAM" id="SSF100920">
    <property type="entry name" value="Heat shock protein 70kD (HSP70), peptide-binding domain"/>
    <property type="match status" value="1"/>
</dbReference>
<dbReference type="PROSITE" id="PS00297">
    <property type="entry name" value="HSP70_1"/>
    <property type="match status" value="1"/>
</dbReference>
<dbReference type="PROSITE" id="PS00329">
    <property type="entry name" value="HSP70_2"/>
    <property type="match status" value="1"/>
</dbReference>
<feature type="chain" id="PRO_1000044885" description="Chaperone protein HscA homolog">
    <location>
        <begin position="1"/>
        <end position="620"/>
    </location>
</feature>
<keyword id="KW-0067">ATP-binding</keyword>
<keyword id="KW-0143">Chaperone</keyword>
<keyword id="KW-0547">Nucleotide-binding</keyword>
<keyword id="KW-1185">Reference proteome</keyword>
<gene>
    <name evidence="1" type="primary">hscA</name>
    <name type="ordered locus">Sbal_2393</name>
</gene>
<reference key="1">
    <citation type="submission" date="2007-02" db="EMBL/GenBank/DDBJ databases">
        <title>Complete sequence of chromosome of Shewanella baltica OS155.</title>
        <authorList>
            <consortium name="US DOE Joint Genome Institute"/>
            <person name="Copeland A."/>
            <person name="Lucas S."/>
            <person name="Lapidus A."/>
            <person name="Barry K."/>
            <person name="Detter J.C."/>
            <person name="Glavina del Rio T."/>
            <person name="Hammon N."/>
            <person name="Israni S."/>
            <person name="Dalin E."/>
            <person name="Tice H."/>
            <person name="Pitluck S."/>
            <person name="Sims D.R."/>
            <person name="Brettin T."/>
            <person name="Bruce D."/>
            <person name="Han C."/>
            <person name="Tapia R."/>
            <person name="Brainard J."/>
            <person name="Schmutz J."/>
            <person name="Larimer F."/>
            <person name="Land M."/>
            <person name="Hauser L."/>
            <person name="Kyrpides N."/>
            <person name="Mikhailova N."/>
            <person name="Brettar I."/>
            <person name="Klappenbach J."/>
            <person name="Konstantinidis K."/>
            <person name="Rodrigues J."/>
            <person name="Tiedje J."/>
            <person name="Richardson P."/>
        </authorList>
    </citation>
    <scope>NUCLEOTIDE SEQUENCE [LARGE SCALE GENOMIC DNA]</scope>
    <source>
        <strain>OS155 / ATCC BAA-1091</strain>
    </source>
</reference>
<protein>
    <recommendedName>
        <fullName evidence="1">Chaperone protein HscA homolog</fullName>
    </recommendedName>
</protein>
<comment type="function">
    <text evidence="1">Chaperone involved in the maturation of iron-sulfur cluster-containing proteins. Has a low intrinsic ATPase activity which is markedly stimulated by HscB.</text>
</comment>
<comment type="similarity">
    <text evidence="1">Belongs to the heat shock protein 70 family.</text>
</comment>
<organism>
    <name type="scientific">Shewanella baltica (strain OS155 / ATCC BAA-1091)</name>
    <dbReference type="NCBI Taxonomy" id="325240"/>
    <lineage>
        <taxon>Bacteria</taxon>
        <taxon>Pseudomonadati</taxon>
        <taxon>Pseudomonadota</taxon>
        <taxon>Gammaproteobacteria</taxon>
        <taxon>Alteromonadales</taxon>
        <taxon>Shewanellaceae</taxon>
        <taxon>Shewanella</taxon>
    </lineage>
</organism>
<sequence length="620" mass="66179">MALLQIAEPGQSAAPHQHRLAVGIDLGTTNSLVAAVRSGETATLPDELGQHSLPSIVRYTQDSVEVGALAALSSAQDPQNTIVSVKRFMGRSLADIKAGEQSFPYEFAESENGLPLFVTPQGQVNPVQVSAEILRPLIARAEKTLGGELQGVVITVPAYFDDAQRQGTKDAAALLGVKVLRLLNEPTAAAIAYGLDSKQEGVIAIYDLGGGTFDISILRLNRGVFEVLATGGDSALGGDDFDHLLQAHMQQVWQLSDIDSQLSRQLLIESRRVKEALTDAAETEAKVILADGTELTQIVSKAEFDAMIAALVKKTIASCRRTLRDAGVTTDEVLETVMVGGSTRVPLVREQVEAFFGKPPLTSIDPDRVVAIGAAIQADILVGNKPESDLLLLDVIPLSLGIETMGGLVEKVVSRNTTIPVARAQEFTTFKDGQTAMAFHVVQGERELVADCRSLARFTLKGIPPLAAGAAHIRVTFQVDADGLLSVTAMEKSTGVQSSIQVKPSFGLSDTEIATMLKDSMKYAKDDIGRRMLAEQQVEAARVLESLHAALAKDGDLLNADERGQIDATMVNVAQVAAGDDADAIKLAIEKLDEQTQDFAARRMDNSIRVAFKGQSIDNI</sequence>
<name>HSCA_SHEB5</name>
<evidence type="ECO:0000255" key="1">
    <source>
        <dbReference type="HAMAP-Rule" id="MF_00679"/>
    </source>
</evidence>
<accession>A3D573</accession>